<proteinExistence type="inferred from homology"/>
<organism>
    <name type="scientific">Haemophilus influenzae (strain ATCC 51907 / DSM 11121 / KW20 / Rd)</name>
    <dbReference type="NCBI Taxonomy" id="71421"/>
    <lineage>
        <taxon>Bacteria</taxon>
        <taxon>Pseudomonadati</taxon>
        <taxon>Pseudomonadota</taxon>
        <taxon>Gammaproteobacteria</taxon>
        <taxon>Pasteurellales</taxon>
        <taxon>Pasteurellaceae</taxon>
        <taxon>Haemophilus</taxon>
    </lineage>
</organism>
<protein>
    <recommendedName>
        <fullName>Histidine biosynthesis bifunctional protein HisIE</fullName>
    </recommendedName>
    <domain>
        <recommendedName>
            <fullName>Phosphoribosyl-AMP cyclohydrolase</fullName>
            <shortName>PRA-CH</shortName>
            <ecNumber>3.5.4.19</ecNumber>
        </recommendedName>
    </domain>
    <domain>
        <recommendedName>
            <fullName>Phosphoribosyl-ATP pyrophosphatase</fullName>
            <shortName>PRA-PH</shortName>
            <ecNumber>3.6.1.31</ecNumber>
        </recommendedName>
    </domain>
</protein>
<comment type="catalytic activity">
    <reaction>
        <text>1-(5-phospho-beta-D-ribosyl)-ATP + H2O = 1-(5-phospho-beta-D-ribosyl)-5'-AMP + diphosphate + H(+)</text>
        <dbReference type="Rhea" id="RHEA:22828"/>
        <dbReference type="ChEBI" id="CHEBI:15377"/>
        <dbReference type="ChEBI" id="CHEBI:15378"/>
        <dbReference type="ChEBI" id="CHEBI:33019"/>
        <dbReference type="ChEBI" id="CHEBI:59457"/>
        <dbReference type="ChEBI" id="CHEBI:73183"/>
        <dbReference type="EC" id="3.6.1.31"/>
    </reaction>
</comment>
<comment type="catalytic activity">
    <reaction>
        <text>1-(5-phospho-beta-D-ribosyl)-5'-AMP + H2O = 1-(5-phospho-beta-D-ribosyl)-5-[(5-phospho-beta-D-ribosylamino)methylideneamino]imidazole-4-carboxamide</text>
        <dbReference type="Rhea" id="RHEA:20049"/>
        <dbReference type="ChEBI" id="CHEBI:15377"/>
        <dbReference type="ChEBI" id="CHEBI:58435"/>
        <dbReference type="ChEBI" id="CHEBI:59457"/>
        <dbReference type="EC" id="3.5.4.19"/>
    </reaction>
</comment>
<comment type="pathway">
    <text>Amino-acid biosynthesis; L-histidine biosynthesis; L-histidine from 5-phospho-alpha-D-ribose 1-diphosphate: step 2/9.</text>
</comment>
<comment type="pathway">
    <text>Amino-acid biosynthesis; L-histidine biosynthesis; L-histidine from 5-phospho-alpha-D-ribose 1-diphosphate: step 3/9.</text>
</comment>
<comment type="subcellular location">
    <subcellularLocation>
        <location evidence="1">Cytoplasm</location>
    </subcellularLocation>
</comment>
<comment type="similarity">
    <text evidence="2">In the N-terminal section; belongs to the PRA-CH family.</text>
</comment>
<comment type="similarity">
    <text evidence="2">In the C-terminal section; belongs to the PRA-PH family.</text>
</comment>
<dbReference type="EC" id="3.5.4.19"/>
<dbReference type="EC" id="3.6.1.31"/>
<dbReference type="EMBL" id="L42023">
    <property type="protein sequence ID" value="AAC22134.1"/>
    <property type="molecule type" value="Genomic_DNA"/>
</dbReference>
<dbReference type="PIR" id="A64071">
    <property type="entry name" value="A64071"/>
</dbReference>
<dbReference type="RefSeq" id="NP_438636.1">
    <property type="nucleotide sequence ID" value="NC_000907.1"/>
</dbReference>
<dbReference type="SMR" id="P44434"/>
<dbReference type="STRING" id="71421.HI_0475"/>
<dbReference type="EnsemblBacteria" id="AAC22134">
    <property type="protein sequence ID" value="AAC22134"/>
    <property type="gene ID" value="HI_0475"/>
</dbReference>
<dbReference type="KEGG" id="hin:HI_0475"/>
<dbReference type="PATRIC" id="fig|71421.8.peg.495"/>
<dbReference type="eggNOG" id="COG0139">
    <property type="taxonomic scope" value="Bacteria"/>
</dbReference>
<dbReference type="eggNOG" id="COG0140">
    <property type="taxonomic scope" value="Bacteria"/>
</dbReference>
<dbReference type="HOGENOM" id="CLU_048577_3_1_6"/>
<dbReference type="OrthoDB" id="9795769at2"/>
<dbReference type="PhylomeDB" id="P44434"/>
<dbReference type="BioCyc" id="HINF71421:G1GJ1-491-MONOMER"/>
<dbReference type="UniPathway" id="UPA00031">
    <property type="reaction ID" value="UER00007"/>
</dbReference>
<dbReference type="UniPathway" id="UPA00031">
    <property type="reaction ID" value="UER00008"/>
</dbReference>
<dbReference type="Proteomes" id="UP000000579">
    <property type="component" value="Chromosome"/>
</dbReference>
<dbReference type="GO" id="GO:0005737">
    <property type="term" value="C:cytoplasm"/>
    <property type="evidence" value="ECO:0007669"/>
    <property type="project" value="UniProtKB-SubCell"/>
</dbReference>
<dbReference type="GO" id="GO:0005524">
    <property type="term" value="F:ATP binding"/>
    <property type="evidence" value="ECO:0007669"/>
    <property type="project" value="UniProtKB-KW"/>
</dbReference>
<dbReference type="GO" id="GO:0004635">
    <property type="term" value="F:phosphoribosyl-AMP cyclohydrolase activity"/>
    <property type="evidence" value="ECO:0007669"/>
    <property type="project" value="UniProtKB-UniRule"/>
</dbReference>
<dbReference type="GO" id="GO:0004636">
    <property type="term" value="F:phosphoribosyl-ATP diphosphatase activity"/>
    <property type="evidence" value="ECO:0007669"/>
    <property type="project" value="UniProtKB-UniRule"/>
</dbReference>
<dbReference type="GO" id="GO:0000105">
    <property type="term" value="P:L-histidine biosynthetic process"/>
    <property type="evidence" value="ECO:0007669"/>
    <property type="project" value="UniProtKB-UniRule"/>
</dbReference>
<dbReference type="CDD" id="cd11534">
    <property type="entry name" value="NTP-PPase_HisIE_like"/>
    <property type="match status" value="1"/>
</dbReference>
<dbReference type="FunFam" id="1.10.287.1080:FF:000002">
    <property type="entry name" value="Histidine biosynthesis bifunctional protein HisIE"/>
    <property type="match status" value="1"/>
</dbReference>
<dbReference type="FunFam" id="3.10.20.810:FF:000001">
    <property type="entry name" value="Histidine biosynthesis bifunctional protein HisIE"/>
    <property type="match status" value="1"/>
</dbReference>
<dbReference type="Gene3D" id="1.10.287.1080">
    <property type="entry name" value="MazG-like"/>
    <property type="match status" value="1"/>
</dbReference>
<dbReference type="Gene3D" id="3.10.20.810">
    <property type="entry name" value="Phosphoribosyl-AMP cyclohydrolase"/>
    <property type="match status" value="1"/>
</dbReference>
<dbReference type="HAMAP" id="MF_01020">
    <property type="entry name" value="HisE"/>
    <property type="match status" value="1"/>
</dbReference>
<dbReference type="HAMAP" id="MF_01019">
    <property type="entry name" value="HisIE"/>
    <property type="match status" value="1"/>
</dbReference>
<dbReference type="InterPro" id="IPR023019">
    <property type="entry name" value="His_synth_HisIE"/>
</dbReference>
<dbReference type="InterPro" id="IPR008179">
    <property type="entry name" value="HisE"/>
</dbReference>
<dbReference type="InterPro" id="IPR021130">
    <property type="entry name" value="PRib-ATP_PPHydrolase-like"/>
</dbReference>
<dbReference type="InterPro" id="IPR002496">
    <property type="entry name" value="PRib_AMP_CycHydrolase_dom"/>
</dbReference>
<dbReference type="InterPro" id="IPR038019">
    <property type="entry name" value="PRib_AMP_CycHydrolase_sf"/>
</dbReference>
<dbReference type="NCBIfam" id="TIGR03188">
    <property type="entry name" value="histidine_hisI"/>
    <property type="match status" value="1"/>
</dbReference>
<dbReference type="NCBIfam" id="NF000768">
    <property type="entry name" value="PRK00051.1"/>
    <property type="match status" value="1"/>
</dbReference>
<dbReference type="NCBIfam" id="NF002747">
    <property type="entry name" value="PRK02759.1"/>
    <property type="match status" value="1"/>
</dbReference>
<dbReference type="PANTHER" id="PTHR42945">
    <property type="entry name" value="HISTIDINE BIOSYNTHESIS BIFUNCTIONAL PROTEIN"/>
    <property type="match status" value="1"/>
</dbReference>
<dbReference type="PANTHER" id="PTHR42945:SF9">
    <property type="entry name" value="HISTIDINE BIOSYNTHESIS BIFUNCTIONAL PROTEIN HISIE"/>
    <property type="match status" value="1"/>
</dbReference>
<dbReference type="Pfam" id="PF01502">
    <property type="entry name" value="PRA-CH"/>
    <property type="match status" value="1"/>
</dbReference>
<dbReference type="Pfam" id="PF01503">
    <property type="entry name" value="PRA-PH"/>
    <property type="match status" value="1"/>
</dbReference>
<dbReference type="SUPFAM" id="SSF101386">
    <property type="entry name" value="all-alpha NTP pyrophosphatases"/>
    <property type="match status" value="1"/>
</dbReference>
<dbReference type="SUPFAM" id="SSF141734">
    <property type="entry name" value="HisI-like"/>
    <property type="match status" value="1"/>
</dbReference>
<feature type="chain" id="PRO_0000136415" description="Histidine biosynthesis bifunctional protein HisIE">
    <location>
        <begin position="1"/>
        <end position="221"/>
    </location>
</feature>
<feature type="region of interest" description="Phosphoribosyl-AMP cyclohydrolase">
    <location>
        <begin position="1"/>
        <end position="121"/>
    </location>
</feature>
<feature type="region of interest" description="Phosphoribosyl-ATP pyrophosphohydrolase">
    <location>
        <begin position="122"/>
        <end position="221"/>
    </location>
</feature>
<reference key="1">
    <citation type="journal article" date="1995" name="Science">
        <title>Whole-genome random sequencing and assembly of Haemophilus influenzae Rd.</title>
        <authorList>
            <person name="Fleischmann R.D."/>
            <person name="Adams M.D."/>
            <person name="White O."/>
            <person name="Clayton R.A."/>
            <person name="Kirkness E.F."/>
            <person name="Kerlavage A.R."/>
            <person name="Bult C.J."/>
            <person name="Tomb J.-F."/>
            <person name="Dougherty B.A."/>
            <person name="Merrick J.M."/>
            <person name="McKenney K."/>
            <person name="Sutton G.G."/>
            <person name="FitzHugh W."/>
            <person name="Fields C.A."/>
            <person name="Gocayne J.D."/>
            <person name="Scott J.D."/>
            <person name="Shirley R."/>
            <person name="Liu L.-I."/>
            <person name="Glodek A."/>
            <person name="Kelley J.M."/>
            <person name="Weidman J.F."/>
            <person name="Phillips C.A."/>
            <person name="Spriggs T."/>
            <person name="Hedblom E."/>
            <person name="Cotton M.D."/>
            <person name="Utterback T.R."/>
            <person name="Hanna M.C."/>
            <person name="Nguyen D.T."/>
            <person name="Saudek D.M."/>
            <person name="Brandon R.C."/>
            <person name="Fine L.D."/>
            <person name="Fritchman J.L."/>
            <person name="Fuhrmann J.L."/>
            <person name="Geoghagen N.S.M."/>
            <person name="Gnehm C.L."/>
            <person name="McDonald L.A."/>
            <person name="Small K.V."/>
            <person name="Fraser C.M."/>
            <person name="Smith H.O."/>
            <person name="Venter J.C."/>
        </authorList>
    </citation>
    <scope>NUCLEOTIDE SEQUENCE [LARGE SCALE GENOMIC DNA]</scope>
    <source>
        <strain>ATCC 51907 / DSM 11121 / KW20 / Rd</strain>
    </source>
</reference>
<keyword id="KW-0028">Amino-acid biosynthesis</keyword>
<keyword id="KW-0067">ATP-binding</keyword>
<keyword id="KW-0963">Cytoplasm</keyword>
<keyword id="KW-0368">Histidine biosynthesis</keyword>
<keyword id="KW-0378">Hydrolase</keyword>
<keyword id="KW-0511">Multifunctional enzyme</keyword>
<keyword id="KW-0547">Nucleotide-binding</keyword>
<keyword id="KW-1185">Reference proteome</keyword>
<name>HIS2_HAEIN</name>
<accession>P44434</accession>
<sequence>MNITKIDWQKVNGLLPVIIQNISTREVLMLGYMNEEALTKTIKERKVTFFSRTKQRLWTKGEISGNFLNVEEMSLDCDNDTLLILVDPIGATCHTGEYSCFHQFTSPQSENKKQQFANWAWFIKLEQHLKEKKNADPSNSYTATLHAKGTKKIAQKVGEEGVETALAAVAQDKAEVISEATDLVYHLTVLLHNQDLQWYEIIAKLQERHQGIGLHPEGGNK</sequence>
<gene>
    <name type="primary">hisI</name>
    <name type="synonym">hisIE</name>
    <name type="ordered locus">HI_0475</name>
</gene>
<evidence type="ECO:0000250" key="1"/>
<evidence type="ECO:0000305" key="2"/>